<keyword id="KW-1185">Reference proteome</keyword>
<keyword id="KW-0687">Ribonucleoprotein</keyword>
<keyword id="KW-0689">Ribosomal protein</keyword>
<keyword id="KW-0694">RNA-binding</keyword>
<keyword id="KW-0699">rRNA-binding</keyword>
<sequence length="273" mass="30045">MAIVKCKPTSAGRRHVVKIVNPELHKGKPYAPLLDTKSKTGGRNNLGRITTRHIGGGHKQHYRLVDFKRNKLDIPAVVERLEYDPNRSANIALVLYKDGERRYILAPKGLSVGDEIQAGVNAPIKVGNSLPMRNIPVGSTVHNVELKPGKGGQIARSAGAYVQIIAREGNYVTLRLRSGEMRKVLAECVATIGEVGNSEHMLRVLGKAGANRWRGIRPTVRGTAMNPVDHPHGGGEGRNFGKHPVTPWGVQTKGKKTRHNKRTDKYIVRRRGK</sequence>
<dbReference type="EMBL" id="CP000746">
    <property type="protein sequence ID" value="ABR73838.1"/>
    <property type="molecule type" value="Genomic_DNA"/>
</dbReference>
<dbReference type="RefSeq" id="WP_012072222.1">
    <property type="nucleotide sequence ID" value="NC_009655.1"/>
</dbReference>
<dbReference type="SMR" id="A6VLJ1"/>
<dbReference type="STRING" id="339671.Asuc_0462"/>
<dbReference type="KEGG" id="asu:Asuc_0462"/>
<dbReference type="eggNOG" id="COG0090">
    <property type="taxonomic scope" value="Bacteria"/>
</dbReference>
<dbReference type="HOGENOM" id="CLU_036235_2_1_6"/>
<dbReference type="OrthoDB" id="9778722at2"/>
<dbReference type="Proteomes" id="UP000001114">
    <property type="component" value="Chromosome"/>
</dbReference>
<dbReference type="GO" id="GO:0015934">
    <property type="term" value="C:large ribosomal subunit"/>
    <property type="evidence" value="ECO:0007669"/>
    <property type="project" value="InterPro"/>
</dbReference>
<dbReference type="GO" id="GO:0019843">
    <property type="term" value="F:rRNA binding"/>
    <property type="evidence" value="ECO:0007669"/>
    <property type="project" value="UniProtKB-UniRule"/>
</dbReference>
<dbReference type="GO" id="GO:0003735">
    <property type="term" value="F:structural constituent of ribosome"/>
    <property type="evidence" value="ECO:0007669"/>
    <property type="project" value="InterPro"/>
</dbReference>
<dbReference type="GO" id="GO:0016740">
    <property type="term" value="F:transferase activity"/>
    <property type="evidence" value="ECO:0007669"/>
    <property type="project" value="InterPro"/>
</dbReference>
<dbReference type="GO" id="GO:0002181">
    <property type="term" value="P:cytoplasmic translation"/>
    <property type="evidence" value="ECO:0007669"/>
    <property type="project" value="TreeGrafter"/>
</dbReference>
<dbReference type="FunFam" id="2.30.30.30:FF:000001">
    <property type="entry name" value="50S ribosomal protein L2"/>
    <property type="match status" value="1"/>
</dbReference>
<dbReference type="FunFam" id="2.40.50.140:FF:000003">
    <property type="entry name" value="50S ribosomal protein L2"/>
    <property type="match status" value="1"/>
</dbReference>
<dbReference type="FunFam" id="4.10.950.10:FF:000001">
    <property type="entry name" value="50S ribosomal protein L2"/>
    <property type="match status" value="1"/>
</dbReference>
<dbReference type="Gene3D" id="2.30.30.30">
    <property type="match status" value="1"/>
</dbReference>
<dbReference type="Gene3D" id="2.40.50.140">
    <property type="entry name" value="Nucleic acid-binding proteins"/>
    <property type="match status" value="1"/>
</dbReference>
<dbReference type="Gene3D" id="4.10.950.10">
    <property type="entry name" value="Ribosomal protein L2, domain 3"/>
    <property type="match status" value="1"/>
</dbReference>
<dbReference type="HAMAP" id="MF_01320_B">
    <property type="entry name" value="Ribosomal_uL2_B"/>
    <property type="match status" value="1"/>
</dbReference>
<dbReference type="InterPro" id="IPR012340">
    <property type="entry name" value="NA-bd_OB-fold"/>
</dbReference>
<dbReference type="InterPro" id="IPR014722">
    <property type="entry name" value="Rib_uL2_dom2"/>
</dbReference>
<dbReference type="InterPro" id="IPR002171">
    <property type="entry name" value="Ribosomal_uL2"/>
</dbReference>
<dbReference type="InterPro" id="IPR005880">
    <property type="entry name" value="Ribosomal_uL2_bac/org-type"/>
</dbReference>
<dbReference type="InterPro" id="IPR022669">
    <property type="entry name" value="Ribosomal_uL2_C"/>
</dbReference>
<dbReference type="InterPro" id="IPR022671">
    <property type="entry name" value="Ribosomal_uL2_CS"/>
</dbReference>
<dbReference type="InterPro" id="IPR014726">
    <property type="entry name" value="Ribosomal_uL2_dom3"/>
</dbReference>
<dbReference type="InterPro" id="IPR022666">
    <property type="entry name" value="Ribosomal_uL2_RNA-bd_dom"/>
</dbReference>
<dbReference type="InterPro" id="IPR008991">
    <property type="entry name" value="Translation_prot_SH3-like_sf"/>
</dbReference>
<dbReference type="NCBIfam" id="TIGR01171">
    <property type="entry name" value="rplB_bact"/>
    <property type="match status" value="1"/>
</dbReference>
<dbReference type="PANTHER" id="PTHR13691:SF5">
    <property type="entry name" value="LARGE RIBOSOMAL SUBUNIT PROTEIN UL2M"/>
    <property type="match status" value="1"/>
</dbReference>
<dbReference type="PANTHER" id="PTHR13691">
    <property type="entry name" value="RIBOSOMAL PROTEIN L2"/>
    <property type="match status" value="1"/>
</dbReference>
<dbReference type="Pfam" id="PF00181">
    <property type="entry name" value="Ribosomal_L2"/>
    <property type="match status" value="1"/>
</dbReference>
<dbReference type="Pfam" id="PF03947">
    <property type="entry name" value="Ribosomal_L2_C"/>
    <property type="match status" value="1"/>
</dbReference>
<dbReference type="PIRSF" id="PIRSF002158">
    <property type="entry name" value="Ribosomal_L2"/>
    <property type="match status" value="1"/>
</dbReference>
<dbReference type="SMART" id="SM01383">
    <property type="entry name" value="Ribosomal_L2"/>
    <property type="match status" value="1"/>
</dbReference>
<dbReference type="SMART" id="SM01382">
    <property type="entry name" value="Ribosomal_L2_C"/>
    <property type="match status" value="1"/>
</dbReference>
<dbReference type="SUPFAM" id="SSF50249">
    <property type="entry name" value="Nucleic acid-binding proteins"/>
    <property type="match status" value="1"/>
</dbReference>
<dbReference type="SUPFAM" id="SSF50104">
    <property type="entry name" value="Translation proteins SH3-like domain"/>
    <property type="match status" value="1"/>
</dbReference>
<dbReference type="PROSITE" id="PS00467">
    <property type="entry name" value="RIBOSOMAL_L2"/>
    <property type="match status" value="1"/>
</dbReference>
<reference key="1">
    <citation type="journal article" date="2010" name="BMC Genomics">
        <title>A genomic perspective on the potential of Actinobacillus succinogenes for industrial succinate production.</title>
        <authorList>
            <person name="McKinlay J.B."/>
            <person name="Laivenieks M."/>
            <person name="Schindler B.D."/>
            <person name="McKinlay A.A."/>
            <person name="Siddaramappa S."/>
            <person name="Challacombe J.F."/>
            <person name="Lowry S.R."/>
            <person name="Clum A."/>
            <person name="Lapidus A.L."/>
            <person name="Burkhart K.B."/>
            <person name="Harkins V."/>
            <person name="Vieille C."/>
        </authorList>
    </citation>
    <scope>NUCLEOTIDE SEQUENCE [LARGE SCALE GENOMIC DNA]</scope>
    <source>
        <strain>ATCC 55618 / DSM 22257 / CCUG 43843 / 130Z</strain>
    </source>
</reference>
<gene>
    <name evidence="1" type="primary">rplB</name>
    <name type="ordered locus">Asuc_0462</name>
</gene>
<comment type="function">
    <text evidence="1">One of the primary rRNA binding proteins. Required for association of the 30S and 50S subunits to form the 70S ribosome, for tRNA binding and peptide bond formation. It has been suggested to have peptidyltransferase activity; this is somewhat controversial. Makes several contacts with the 16S rRNA in the 70S ribosome.</text>
</comment>
<comment type="subunit">
    <text evidence="1">Part of the 50S ribosomal subunit. Forms a bridge to the 30S subunit in the 70S ribosome.</text>
</comment>
<comment type="similarity">
    <text evidence="1">Belongs to the universal ribosomal protein uL2 family.</text>
</comment>
<accession>A6VLJ1</accession>
<protein>
    <recommendedName>
        <fullName evidence="1">Large ribosomal subunit protein uL2</fullName>
    </recommendedName>
    <alternativeName>
        <fullName evidence="3">50S ribosomal protein L2</fullName>
    </alternativeName>
</protein>
<proteinExistence type="inferred from homology"/>
<organism>
    <name type="scientific">Actinobacillus succinogenes (strain ATCC 55618 / DSM 22257 / CCUG 43843 / 130Z)</name>
    <dbReference type="NCBI Taxonomy" id="339671"/>
    <lineage>
        <taxon>Bacteria</taxon>
        <taxon>Pseudomonadati</taxon>
        <taxon>Pseudomonadota</taxon>
        <taxon>Gammaproteobacteria</taxon>
        <taxon>Pasteurellales</taxon>
        <taxon>Pasteurellaceae</taxon>
        <taxon>Actinobacillus</taxon>
    </lineage>
</organism>
<evidence type="ECO:0000255" key="1">
    <source>
        <dbReference type="HAMAP-Rule" id="MF_01320"/>
    </source>
</evidence>
<evidence type="ECO:0000256" key="2">
    <source>
        <dbReference type="SAM" id="MobiDB-lite"/>
    </source>
</evidence>
<evidence type="ECO:0000305" key="3"/>
<feature type="chain" id="PRO_1000073225" description="Large ribosomal subunit protein uL2">
    <location>
        <begin position="1"/>
        <end position="273"/>
    </location>
</feature>
<feature type="region of interest" description="Disordered" evidence="2">
    <location>
        <begin position="221"/>
        <end position="263"/>
    </location>
</feature>
<feature type="compositionally biased region" description="Basic residues" evidence="2">
    <location>
        <begin position="253"/>
        <end position="263"/>
    </location>
</feature>
<name>RL2_ACTSZ</name>